<name>PVK3_BLADU</name>
<dbReference type="GO" id="GO:0005576">
    <property type="term" value="C:extracellular region"/>
    <property type="evidence" value="ECO:0007669"/>
    <property type="project" value="UniProtKB-SubCell"/>
</dbReference>
<dbReference type="GO" id="GO:0007218">
    <property type="term" value="P:neuropeptide signaling pathway"/>
    <property type="evidence" value="ECO:0007669"/>
    <property type="project" value="UniProtKB-KW"/>
</dbReference>
<dbReference type="InterPro" id="IPR013231">
    <property type="entry name" value="Periviscerokinin"/>
</dbReference>
<dbReference type="Pfam" id="PF08259">
    <property type="entry name" value="Periviscerokin"/>
    <property type="match status" value="1"/>
</dbReference>
<organism>
    <name type="scientific">Blaptica dubia</name>
    <name type="common">Argentinian wood cockroach</name>
    <dbReference type="NCBI Taxonomy" id="132935"/>
    <lineage>
        <taxon>Eukaryota</taxon>
        <taxon>Metazoa</taxon>
        <taxon>Ecdysozoa</taxon>
        <taxon>Arthropoda</taxon>
        <taxon>Hexapoda</taxon>
        <taxon>Insecta</taxon>
        <taxon>Pterygota</taxon>
        <taxon>Neoptera</taxon>
        <taxon>Polyneoptera</taxon>
        <taxon>Dictyoptera</taxon>
        <taxon>Blattodea</taxon>
        <taxon>Blaberoidea</taxon>
        <taxon>Blaberidae</taxon>
        <taxon>Blaberinae</taxon>
        <taxon>Blaptica</taxon>
    </lineage>
</organism>
<comment type="function">
    <text evidence="1">Mediates visceral muscle contractile activity (myotropic activity).</text>
</comment>
<comment type="subcellular location">
    <subcellularLocation>
        <location>Secreted</location>
    </subcellularLocation>
</comment>
<comment type="mass spectrometry" mass="1146.6" method="MALDI" evidence="1"/>
<comment type="similarity">
    <text evidence="3">Belongs to the periviscerokinin family.</text>
</comment>
<accession>P83934</accession>
<accession>P82700</accession>
<reference key="1">
    <citation type="journal article" date="2000" name="Eur. J. Biochem.">
        <title>Identification of novel periviscerokinins from single neurohaemal release sites in insects. MS/MS fragmentation complemented by Edman degradation.</title>
        <authorList>
            <person name="Predel R."/>
            <person name="Kellner R."/>
            <person name="Baggerman G."/>
            <person name="Steinmetzer T."/>
            <person name="Schoofs L."/>
        </authorList>
    </citation>
    <scope>PROTEIN SEQUENCE</scope>
    <scope>FUNCTION</scope>
    <scope>MASS SPECTROMETRY</scope>
    <scope>AMIDATION AT VAL-11</scope>
    <source>
        <tissue>Abdominal perisympathetic organs</tissue>
    </source>
</reference>
<reference key="2">
    <citation type="journal article" date="2009" name="BMC Evol. Biol.">
        <title>A proteomic approach for studying insect phylogeny: CAPA peptides of ancient insect taxa (Dictyoptera, Blattoptera) as a test case.</title>
        <authorList>
            <person name="Roth S."/>
            <person name="Fromm B."/>
            <person name="Gaede G."/>
            <person name="Predel R."/>
        </authorList>
    </citation>
    <scope>PROTEIN SEQUENCE</scope>
    <scope>AMIDATION AT VAL-11</scope>
    <source>
        <tissue>Abdominal perisympathetic organs</tissue>
    </source>
</reference>
<proteinExistence type="evidence at protein level"/>
<evidence type="ECO:0000269" key="1">
    <source>
    </source>
</evidence>
<evidence type="ECO:0000269" key="2">
    <source>
    </source>
</evidence>
<evidence type="ECO:0000305" key="3"/>
<keyword id="KW-0027">Amidation</keyword>
<keyword id="KW-0903">Direct protein sequencing</keyword>
<keyword id="KW-0527">Neuropeptide</keyword>
<keyword id="KW-0964">Secreted</keyword>
<feature type="peptide" id="PRO_0000044283" description="Periviscerokinin-3">
    <location>
        <begin position="1"/>
        <end position="11"/>
    </location>
</feature>
<feature type="modified residue" description="Valine amide" evidence="1 2">
    <location>
        <position position="11"/>
    </location>
</feature>
<protein>
    <recommendedName>
        <fullName>Periviscerokinin-3</fullName>
        <shortName>BlaDu-PVK-3</shortName>
        <shortName>PVK-3</shortName>
    </recommendedName>
</protein>
<sequence length="11" mass="1147">GSSGMIPFPRV</sequence>